<sequence>MGLAGFARPLQWFKSQWLWLLLSIAAFWLLMRVQVEWLWFGQFDWQGMLLRRWLWQLGGLLLALLVVATCQLWQRNWIKLEGASNLAEPALPLHGWRYGLGLLGCFVVVVGDLVLLTRLAWLACFKPFALGHWWSEPFEDIWALVIPLSCVFISICVMLGNARGGRIAHLMGCFCFSISIARGWGLWSLALAIPPTGIKEPLLGADVSFGLGQFPALAFALVVLLAQLVLTTSTTIWMKLAQPESLSDWVFKGLSPRQCDVMRPLIGIILLTLSALLWLSRHELLWTQNGTVAGAGWLDAHLILPLRSLASLAILVLAFLVIPFPWIQQRRLWRLIASIIGVGAILLEVLLAPFVQWMVVKPRELKLETPYIIRAIKATRKAFQLDSITTTLINPQPQLTQLDLEQGASTLRNIRLWDSQPLLATNRQLQQLRVYYRFSNAAVDRYRFVPDKANRQQVMITARELDQAALPKRSRTWLNRHFVFTHGYGFTLSPVNTRAPDGLPDYFISDLGTSTRLEGSSELGITREDVKEAVPIGRAALYFGMLPSPYALAPSKLKELDYPVGDKNIYNHYLGSGGVPVGHPWQQLAAAMYLFEPRLLNTGSLTINSKLLIRREVRQRVSAIAPFLEVIGDPYLVSTSVNSRDHDYQAKQNQYWIVEAYTSSRTYPYAANLPDGRPVRYLRNSVKAIVDAYSGRVHLYVSEPRDPIILGWQRLFPDLFKPLEEMPSSLREHLKVPTDLFNVQVQQLLRYHVTDPRIFYSGDDVWQVPKELYGKRQVPVDPYHITAQLGSQESSEFLLLQPLTPLARPNLSAWLAARSDGDHYGKLVLLRFPSQTPIFGPEQIQALINQDPQISQQFGLWDRAGSEVVQGNLLVVPLGKALLYVEPVYLRARQGGLPTLTRVVVSDGKRIAMAEDLGEGLRALVDGSSKKAVYLNRNDLPPIKAADQSN</sequence>
<comment type="subcellular location">
    <subcellularLocation>
        <location evidence="1">Cell membrane</location>
        <topology evidence="1">Multi-pass membrane protein</topology>
    </subcellularLocation>
</comment>
<comment type="similarity">
    <text evidence="1">Belongs to the UPF0182 family.</text>
</comment>
<proteinExistence type="inferred from homology"/>
<organism>
    <name type="scientific">Prochlorococcus marinus (strain MIT 9303)</name>
    <dbReference type="NCBI Taxonomy" id="59922"/>
    <lineage>
        <taxon>Bacteria</taxon>
        <taxon>Bacillati</taxon>
        <taxon>Cyanobacteriota</taxon>
        <taxon>Cyanophyceae</taxon>
        <taxon>Synechococcales</taxon>
        <taxon>Prochlorococcaceae</taxon>
        <taxon>Prochlorococcus</taxon>
    </lineage>
</organism>
<accession>A2C9P7</accession>
<reference key="1">
    <citation type="journal article" date="2007" name="PLoS Genet.">
        <title>Patterns and implications of gene gain and loss in the evolution of Prochlorococcus.</title>
        <authorList>
            <person name="Kettler G.C."/>
            <person name="Martiny A.C."/>
            <person name="Huang K."/>
            <person name="Zucker J."/>
            <person name="Coleman M.L."/>
            <person name="Rodrigue S."/>
            <person name="Chen F."/>
            <person name="Lapidus A."/>
            <person name="Ferriera S."/>
            <person name="Johnson J."/>
            <person name="Steglich C."/>
            <person name="Church G.M."/>
            <person name="Richardson P."/>
            <person name="Chisholm S.W."/>
        </authorList>
    </citation>
    <scope>NUCLEOTIDE SEQUENCE [LARGE SCALE GENOMIC DNA]</scope>
    <source>
        <strain>MIT 9303</strain>
    </source>
</reference>
<protein>
    <recommendedName>
        <fullName evidence="1">UPF0182 protein P9303_14611</fullName>
    </recommendedName>
</protein>
<feature type="chain" id="PRO_0000291288" description="UPF0182 protein P9303_14611">
    <location>
        <begin position="1"/>
        <end position="950"/>
    </location>
</feature>
<feature type="transmembrane region" description="Helical" evidence="1">
    <location>
        <begin position="20"/>
        <end position="40"/>
    </location>
</feature>
<feature type="transmembrane region" description="Helical" evidence="1">
    <location>
        <begin position="53"/>
        <end position="73"/>
    </location>
</feature>
<feature type="transmembrane region" description="Helical" evidence="1">
    <location>
        <begin position="102"/>
        <end position="122"/>
    </location>
</feature>
<feature type="transmembrane region" description="Helical" evidence="1">
    <location>
        <begin position="141"/>
        <end position="161"/>
    </location>
</feature>
<feature type="transmembrane region" description="Helical" evidence="1">
    <location>
        <begin position="173"/>
        <end position="193"/>
    </location>
</feature>
<feature type="transmembrane region" description="Helical" evidence="1">
    <location>
        <begin position="209"/>
        <end position="229"/>
    </location>
</feature>
<feature type="transmembrane region" description="Helical" evidence="1">
    <location>
        <begin position="259"/>
        <end position="279"/>
    </location>
</feature>
<feature type="transmembrane region" description="Helical" evidence="1">
    <location>
        <begin position="308"/>
        <end position="328"/>
    </location>
</feature>
<feature type="transmembrane region" description="Helical" evidence="1">
    <location>
        <begin position="335"/>
        <end position="355"/>
    </location>
</feature>
<dbReference type="EMBL" id="CP000554">
    <property type="protein sequence ID" value="ABM78207.1"/>
    <property type="molecule type" value="Genomic_DNA"/>
</dbReference>
<dbReference type="RefSeq" id="WP_011826102.1">
    <property type="nucleotide sequence ID" value="NC_008820.1"/>
</dbReference>
<dbReference type="STRING" id="59922.P9303_14611"/>
<dbReference type="KEGG" id="pmf:P9303_14611"/>
<dbReference type="HOGENOM" id="CLU_007733_0_0_3"/>
<dbReference type="BioCyc" id="PMAR59922:G1G80-1261-MONOMER"/>
<dbReference type="Proteomes" id="UP000002274">
    <property type="component" value="Chromosome"/>
</dbReference>
<dbReference type="GO" id="GO:0005576">
    <property type="term" value="C:extracellular region"/>
    <property type="evidence" value="ECO:0007669"/>
    <property type="project" value="TreeGrafter"/>
</dbReference>
<dbReference type="GO" id="GO:0005886">
    <property type="term" value="C:plasma membrane"/>
    <property type="evidence" value="ECO:0007669"/>
    <property type="project" value="UniProtKB-SubCell"/>
</dbReference>
<dbReference type="HAMAP" id="MF_01600">
    <property type="entry name" value="UPF0182"/>
    <property type="match status" value="1"/>
</dbReference>
<dbReference type="InterPro" id="IPR005372">
    <property type="entry name" value="UPF0182"/>
</dbReference>
<dbReference type="PANTHER" id="PTHR39344">
    <property type="entry name" value="UPF0182 PROTEIN SLL1060"/>
    <property type="match status" value="1"/>
</dbReference>
<dbReference type="PANTHER" id="PTHR39344:SF1">
    <property type="entry name" value="UPF0182 PROTEIN SLL1060"/>
    <property type="match status" value="1"/>
</dbReference>
<dbReference type="Pfam" id="PF03699">
    <property type="entry name" value="UPF0182"/>
    <property type="match status" value="1"/>
</dbReference>
<gene>
    <name type="ordered locus">P9303_14611</name>
</gene>
<keyword id="KW-1003">Cell membrane</keyword>
<keyword id="KW-0472">Membrane</keyword>
<keyword id="KW-0812">Transmembrane</keyword>
<keyword id="KW-1133">Transmembrane helix</keyword>
<evidence type="ECO:0000255" key="1">
    <source>
        <dbReference type="HAMAP-Rule" id="MF_01600"/>
    </source>
</evidence>
<name>Y1461_PROM3</name>